<accession>P29989</accession>
<dbReference type="EMBL" id="M80435">
    <property type="protein sequence ID" value="AAA22039.1"/>
    <property type="molecule type" value="Genomic_DNA"/>
</dbReference>
<dbReference type="EMBL" id="BA000019">
    <property type="protein sequence ID" value="BAB72495.1"/>
    <property type="molecule type" value="Genomic_DNA"/>
</dbReference>
<dbReference type="PIR" id="AH1873">
    <property type="entry name" value="AH1873"/>
</dbReference>
<dbReference type="PIR" id="JS0595">
    <property type="entry name" value="JS0595"/>
</dbReference>
<dbReference type="RefSeq" id="WP_010994713.1">
    <property type="nucleotide sequence ID" value="NZ_RSCN01000059.1"/>
</dbReference>
<dbReference type="PDB" id="7EYD">
    <property type="method" value="EM"/>
    <property type="resolution" value="3.90 A"/>
    <property type="chains" value="A2/A5/A6/AA=1-253"/>
</dbReference>
<dbReference type="PDBsum" id="7EYD"/>
<dbReference type="EMDB" id="EMD-31381"/>
<dbReference type="SMR" id="P29989"/>
<dbReference type="STRING" id="103690.gene:10492548"/>
<dbReference type="KEGG" id="ana:alr0537"/>
<dbReference type="eggNOG" id="COG0237">
    <property type="taxonomic scope" value="Bacteria"/>
</dbReference>
<dbReference type="OrthoDB" id="448032at2"/>
<dbReference type="Proteomes" id="UP000002483">
    <property type="component" value="Chromosome"/>
</dbReference>
<dbReference type="GO" id="GO:0030089">
    <property type="term" value="C:phycobilisome"/>
    <property type="evidence" value="ECO:0007669"/>
    <property type="project" value="UniProtKB-KW"/>
</dbReference>
<dbReference type="GO" id="GO:0031676">
    <property type="term" value="C:plasma membrane-derived thylakoid membrane"/>
    <property type="evidence" value="ECO:0007669"/>
    <property type="project" value="UniProtKB-SubCell"/>
</dbReference>
<dbReference type="GO" id="GO:0015979">
    <property type="term" value="P:photosynthesis"/>
    <property type="evidence" value="ECO:0007669"/>
    <property type="project" value="UniProtKB-KW"/>
</dbReference>
<dbReference type="Gene3D" id="1.10.3130.20">
    <property type="entry name" value="Phycobilisome linker domain"/>
    <property type="match status" value="1"/>
</dbReference>
<dbReference type="InterPro" id="IPR001297">
    <property type="entry name" value="PBS_linker_dom"/>
</dbReference>
<dbReference type="InterPro" id="IPR038255">
    <property type="entry name" value="PBS_linker_sf"/>
</dbReference>
<dbReference type="PANTHER" id="PTHR34011">
    <property type="entry name" value="PHYCOBILISOME 32.1 KDA LINKER POLYPEPTIDE, PHYCOCYANIN-ASSOCIATED, ROD 2-RELATED"/>
    <property type="match status" value="1"/>
</dbReference>
<dbReference type="Pfam" id="PF00427">
    <property type="entry name" value="PBS_linker_poly"/>
    <property type="match status" value="1"/>
</dbReference>
<dbReference type="PROSITE" id="PS51445">
    <property type="entry name" value="PBS_LINKER"/>
    <property type="match status" value="1"/>
</dbReference>
<proteinExistence type="evidence at protein level"/>
<reference key="1">
    <citation type="journal article" date="1991" name="Gene">
        <title>A small multigene family encodes the rod-core linker polypeptides of Anabaena sp. PCC7120 phycobilisomes.</title>
        <authorList>
            <person name="Bryant D.A."/>
            <person name="Stirewalt V.L."/>
            <person name="Glauser M."/>
            <person name="Frank G."/>
            <person name="Sidler W."/>
            <person name="Zuber H."/>
        </authorList>
    </citation>
    <scope>NUCLEOTIDE SEQUENCE [GENOMIC DNA]</scope>
    <scope>PROTEIN SEQUENCE OF 2-23</scope>
    <scope>SUBUNIT</scope>
    <source>
        <strain>PCC 7120 / SAG 25.82 / UTEX 2576</strain>
    </source>
</reference>
<reference key="2">
    <citation type="journal article" date="2001" name="DNA Res.">
        <title>Complete genomic sequence of the filamentous nitrogen-fixing cyanobacterium Anabaena sp. strain PCC 7120.</title>
        <authorList>
            <person name="Kaneko T."/>
            <person name="Nakamura Y."/>
            <person name="Wolk C.P."/>
            <person name="Kuritz T."/>
            <person name="Sasamoto S."/>
            <person name="Watanabe A."/>
            <person name="Iriguchi M."/>
            <person name="Ishikawa A."/>
            <person name="Kawashima K."/>
            <person name="Kimura T."/>
            <person name="Kishida Y."/>
            <person name="Kohara M."/>
            <person name="Matsumoto M."/>
            <person name="Matsuno A."/>
            <person name="Muraki A."/>
            <person name="Nakazaki N."/>
            <person name="Shimpo S."/>
            <person name="Sugimoto M."/>
            <person name="Takazawa M."/>
            <person name="Yamada M."/>
            <person name="Yasuda M."/>
            <person name="Tabata S."/>
        </authorList>
    </citation>
    <scope>NUCLEOTIDE SEQUENCE [LARGE SCALE GENOMIC DNA]</scope>
    <source>
        <strain>PCC 7120 / SAG 25.82 / UTEX 2576</strain>
    </source>
</reference>
<reference key="3">
    <citation type="journal article" date="2014" name="Proc. Natl. Acad. Sci. U.S.A.">
        <title>Attachment of phycobilisomes in an antenna-photosystem I supercomplex of cyanobacteria.</title>
        <authorList>
            <person name="Watanabe M."/>
            <person name="Semchonok D.A."/>
            <person name="Webber-Birungi M.T."/>
            <person name="Ehira S."/>
            <person name="Kondo K."/>
            <person name="Narikawa R."/>
            <person name="Ohmori M."/>
            <person name="Boekema E.J."/>
            <person name="Ikeuchi M."/>
        </authorList>
    </citation>
    <scope>PROTEIN SEQUENCE OF 2-14</scope>
    <scope>SUBUNIT</scope>
    <scope>SUBCELLULAR LOCATION</scope>
    <source>
        <strain>PCC 7120 / SAG 25.82 / UTEX 2576</strain>
    </source>
</reference>
<comment type="function">
    <text evidence="1">Rod-core linker protein required for attachment of phycocyanin to allophycocyanin in cores of phycobilisomes.</text>
</comment>
<comment type="function">
    <text evidence="1">Linker polypeptides determine the state of aggregation and the location of the disk-shaped phycobiliprotein units within the phycobilisome and modulate their spectroscopic properties in order to mediate a directed and optimal energy transfer.</text>
</comment>
<comment type="subunit">
    <text evidence="3 4">Part of the phycobilisome, a hemidiscoidal structure that is composed of two distinct substructures: a core complex and a number of rods radiating from the core.</text>
</comment>
<comment type="subcellular location">
    <subcellularLocation>
        <location evidence="4">Cellular thylakoid membrane</location>
        <topology evidence="1">Peripheral membrane protein</topology>
        <orientation evidence="1">Cytoplasmic side</orientation>
    </subcellularLocation>
    <text evidence="4">Part of a phycobilisome rod.</text>
</comment>
<comment type="similarity">
    <text evidence="2">Belongs to the phycobilisome linker protein family.</text>
</comment>
<sequence length="253" mass="29323">MALPLLQYKPSSQNHRVTSFGAADQNEDTPYIYRIEDVSSYTDIQNIIWASYRQVFSEHEILKFNRQKTLESQVKNGSISVRDFIRGLAKSEAFYRLVVSVNNNYRLVDITLKRLLGRSSYNKDEQIAWSIVIGTKGFSGFVDALIDSEEYTKNFGENIVPYQRKRMEGRPHNLVTPRYGEDFQEKAGTVQTDWRFTLDKFYSRKSQEKQLREGDPRKFADLAASVGNQGNYAQRISAFDIDYLNAVPNRSRR</sequence>
<keyword id="KW-0002">3D-structure</keyword>
<keyword id="KW-0042">Antenna complex</keyword>
<keyword id="KW-0903">Direct protein sequencing</keyword>
<keyword id="KW-0472">Membrane</keyword>
<keyword id="KW-0602">Photosynthesis</keyword>
<keyword id="KW-0605">Phycobilisome</keyword>
<keyword id="KW-1185">Reference proteome</keyword>
<keyword id="KW-0793">Thylakoid</keyword>
<feature type="initiator methionine" description="Removed" evidence="3 4">
    <location>
        <position position="1"/>
    </location>
</feature>
<feature type="chain" id="PRO_0000199247" description="Phycobilisome rod-core linker polypeptide CpcG4">
    <location>
        <begin position="2"/>
        <end position="253"/>
    </location>
</feature>
<feature type="domain" description="PBS-linker" evidence="2">
    <location>
        <begin position="11"/>
        <end position="191"/>
    </location>
</feature>
<organism>
    <name type="scientific">Nostoc sp. (strain PCC 7120 / SAG 25.82 / UTEX 2576)</name>
    <dbReference type="NCBI Taxonomy" id="103690"/>
    <lineage>
        <taxon>Bacteria</taxon>
        <taxon>Bacillati</taxon>
        <taxon>Cyanobacteriota</taxon>
        <taxon>Cyanophyceae</taxon>
        <taxon>Nostocales</taxon>
        <taxon>Nostocaceae</taxon>
        <taxon>Nostoc</taxon>
    </lineage>
</organism>
<name>PYG4_NOSS1</name>
<gene>
    <name evidence="5" type="primary">cpcG4</name>
    <name type="ordered locus">alr0537</name>
</gene>
<protein>
    <recommendedName>
        <fullName>Phycobilisome rod-core linker polypeptide CpcG4</fullName>
    </recommendedName>
    <alternativeName>
        <fullName>L-RC 29.2</fullName>
    </alternativeName>
</protein>
<evidence type="ECO:0000250" key="1"/>
<evidence type="ECO:0000255" key="2">
    <source>
        <dbReference type="PROSITE-ProRule" id="PRU00775"/>
    </source>
</evidence>
<evidence type="ECO:0000269" key="3">
    <source>
    </source>
</evidence>
<evidence type="ECO:0000269" key="4">
    <source>
    </source>
</evidence>
<evidence type="ECO:0000303" key="5">
    <source>
    </source>
</evidence>